<proteinExistence type="inferred from homology"/>
<sequence>MGAASGRRGPGLLLPLLLLLPPQPALALDPGLQPGNFSADEAGAQLFAQSYNSSAEQVLFQSVAASWAHDTNITAENARRQEEAALLSQEFAEAWGQKAKELYEPVWQNFTDPQLRRIIGAVRTLGSANLPLAKRQQYNALLSNMSRIYSTAKVCLPNKTATCWSLDPDLTNILASSRSYAMLLFAWEGWHNAAGIPLKPLYEDFTALSNEAYKQDGFTDTGAYWRSWYNSPTFEDDLEHLYQQLEPLYLNLHAFVRRALHRRYGDRYINLRGPIPAHLLGDMWAQSWENIYDMVVPFPDKPNLDVTSTMLQQGWNATHMFRVAEEFFTSLELSPMPPEFWEGSMLEKPADGREVVCHASAWDFYNRKDFRIKQCTRVTMDQLSTVHHEMGHIQYYLQYKDLPVSLRGGANPGFHEAIGDVLALSVSTPAHLHKIGLLDNVTNDTESDINYLLKMALEKIAFLPFGYLVDQWRWGVFSGRTPNSRYNFDWWYLRTKYQGICPPVTRNETHFDAGAKFHVPNVTPYIRYFVSFVLQFQFHEALCKEAGYEGPLHQCDIYQSTKAGAKLRKVLQAGSSRPWQEVLKDMVGLDALDAQPLLKYFQPVTQWLQEQNQQNGEVLGWPEYQWHPPLPDNYPEGIDLVTDEAEASKFVEEYDRTSQVVWNEYAEANWNYNTNITTETSKILLQKNMQIANHTLKYGTQARRFDVNQLQNTTIKRIIKKVQDLERAALPAQELEEYNKILLDMETTYSVATVCHTNGSCLQLEPDLTNVMATSRKYEDLLWAWEGWRDKAGRAILQFYPKYVELINQAARLNGYVDAGDSWRSMYETPSLEQDLERLFQELQPLYLNLHAYVRRALHRHYGAQHINLEGPIPAHLLGNMWAQTWSNIYDLVVPFPSAPSMDTTEAMLKQGWTPRRMFKEADDFFTSLGLLPVPPEFWNKSMLEKPTDGREVVCHASAWDFYNGKDFRIKQCTTVNLEDLVVAHHEMGHIQYFMQYKDLPVALREGANPGFHEAIGDVLALSVSTPKHLHSLNLLSSEGGSDEHDINFLMKMALDKIAFIPFSYLVDQWRWRVFDGSITKENYNQEWWSLRLKYQGLCPPVPRTQGDFDPGAKFHIPSSVPYIRYFVSFIIQFQFHEALCQAAGHTGPLHKCDIYQSKEAGQRLATAMKLGFSRPWPEAMQLITGQPNMSASAMLSYFKPLLDWLRTENELHGEKLGWPQYNWTPNSARSEGPLPDSGRVSFLGLDLDAQQARVGQWLLLFLGIALLVATLGLSQRLFSIRHRSLHRHSHGPQFDSEVELRHS</sequence>
<gene>
    <name evidence="6" type="primary">ACE</name>
    <name type="synonym">DCP1</name>
</gene>
<evidence type="ECO:0000250" key="1">
    <source>
        <dbReference type="UniProtKB" id="P09470"/>
    </source>
</evidence>
<evidence type="ECO:0000250" key="2">
    <source>
        <dbReference type="UniProtKB" id="P12821"/>
    </source>
</evidence>
<evidence type="ECO:0000250" key="3">
    <source>
        <dbReference type="UniProtKB" id="P12822"/>
    </source>
</evidence>
<evidence type="ECO:0000255" key="4"/>
<evidence type="ECO:0000255" key="5">
    <source>
        <dbReference type="PROSITE-ProRule" id="PRU01355"/>
    </source>
</evidence>
<evidence type="ECO:0000303" key="6">
    <source>
    </source>
</evidence>
<evidence type="ECO:0000305" key="7"/>
<keyword id="KW-0877">Alternative promoter usage</keyword>
<keyword id="KW-0112">Calmodulin-binding</keyword>
<keyword id="KW-0121">Carboxypeptidase</keyword>
<keyword id="KW-1003">Cell membrane</keyword>
<keyword id="KW-0963">Cytoplasm</keyword>
<keyword id="KW-1015">Disulfide bond</keyword>
<keyword id="KW-0325">Glycoprotein</keyword>
<keyword id="KW-0378">Hydrolase</keyword>
<keyword id="KW-0472">Membrane</keyword>
<keyword id="KW-0479">Metal-binding</keyword>
<keyword id="KW-0482">Metalloprotease</keyword>
<keyword id="KW-0597">Phosphoprotein</keyword>
<keyword id="KW-0645">Protease</keyword>
<keyword id="KW-1185">Reference proteome</keyword>
<keyword id="KW-0677">Repeat</keyword>
<keyword id="KW-0964">Secreted</keyword>
<keyword id="KW-0732">Signal</keyword>
<keyword id="KW-0812">Transmembrane</keyword>
<keyword id="KW-1133">Transmembrane helix</keyword>
<keyword id="KW-0862">Zinc</keyword>
<dbReference type="EC" id="3.4.15.1" evidence="2"/>
<dbReference type="EMBL" id="AF193486">
    <property type="protein sequence ID" value="AAG31358.1"/>
    <property type="molecule type" value="Genomic_DNA"/>
</dbReference>
<dbReference type="EMBL" id="AF193462">
    <property type="protein sequence ID" value="AAG31358.1"/>
    <property type="status" value="JOINED"/>
    <property type="molecule type" value="Genomic_DNA"/>
</dbReference>
<dbReference type="EMBL" id="AF193464">
    <property type="protein sequence ID" value="AAG31358.1"/>
    <property type="status" value="JOINED"/>
    <property type="molecule type" value="Genomic_DNA"/>
</dbReference>
<dbReference type="EMBL" id="AF193463">
    <property type="protein sequence ID" value="AAG31358.1"/>
    <property type="status" value="JOINED"/>
    <property type="molecule type" value="Genomic_DNA"/>
</dbReference>
<dbReference type="EMBL" id="AF193465">
    <property type="protein sequence ID" value="AAG31358.1"/>
    <property type="status" value="JOINED"/>
    <property type="molecule type" value="Genomic_DNA"/>
</dbReference>
<dbReference type="EMBL" id="AF193467">
    <property type="protein sequence ID" value="AAG31358.1"/>
    <property type="status" value="JOINED"/>
    <property type="molecule type" value="Genomic_DNA"/>
</dbReference>
<dbReference type="EMBL" id="AF193469">
    <property type="protein sequence ID" value="AAG31358.1"/>
    <property type="status" value="JOINED"/>
    <property type="molecule type" value="Genomic_DNA"/>
</dbReference>
<dbReference type="EMBL" id="AF193471">
    <property type="protein sequence ID" value="AAG31358.1"/>
    <property type="status" value="JOINED"/>
    <property type="molecule type" value="Genomic_DNA"/>
</dbReference>
<dbReference type="EMBL" id="AF193473">
    <property type="protein sequence ID" value="AAG31358.1"/>
    <property type="status" value="JOINED"/>
    <property type="molecule type" value="Genomic_DNA"/>
</dbReference>
<dbReference type="EMBL" id="AF193482">
    <property type="protein sequence ID" value="AAG31358.1"/>
    <property type="status" value="JOINED"/>
    <property type="molecule type" value="Genomic_DNA"/>
</dbReference>
<dbReference type="EMBL" id="AF193481">
    <property type="protein sequence ID" value="AAG31358.1"/>
    <property type="status" value="JOINED"/>
    <property type="molecule type" value="Genomic_DNA"/>
</dbReference>
<dbReference type="EMBL" id="AF193480">
    <property type="protein sequence ID" value="AAG31358.1"/>
    <property type="status" value="JOINED"/>
    <property type="molecule type" value="Genomic_DNA"/>
</dbReference>
<dbReference type="EMBL" id="AF193479">
    <property type="protein sequence ID" value="AAG31358.1"/>
    <property type="status" value="JOINED"/>
    <property type="molecule type" value="Genomic_DNA"/>
</dbReference>
<dbReference type="EMBL" id="AF193478">
    <property type="protein sequence ID" value="AAG31358.1"/>
    <property type="status" value="JOINED"/>
    <property type="molecule type" value="Genomic_DNA"/>
</dbReference>
<dbReference type="EMBL" id="AF193477">
    <property type="protein sequence ID" value="AAG31358.1"/>
    <property type="status" value="JOINED"/>
    <property type="molecule type" value="Genomic_DNA"/>
</dbReference>
<dbReference type="EMBL" id="AF193476">
    <property type="protein sequence ID" value="AAG31358.1"/>
    <property type="status" value="JOINED"/>
    <property type="molecule type" value="Genomic_DNA"/>
</dbReference>
<dbReference type="EMBL" id="AF193475">
    <property type="protein sequence ID" value="AAG31358.1"/>
    <property type="status" value="JOINED"/>
    <property type="molecule type" value="Genomic_DNA"/>
</dbReference>
<dbReference type="EMBL" id="AF193474">
    <property type="protein sequence ID" value="AAG31358.1"/>
    <property type="status" value="JOINED"/>
    <property type="molecule type" value="Genomic_DNA"/>
</dbReference>
<dbReference type="EMBL" id="AF193485">
    <property type="protein sequence ID" value="AAG31358.1"/>
    <property type="status" value="JOINED"/>
    <property type="molecule type" value="Genomic_DNA"/>
</dbReference>
<dbReference type="EMBL" id="AF193484">
    <property type="protein sequence ID" value="AAG31358.1"/>
    <property type="status" value="JOINED"/>
    <property type="molecule type" value="Genomic_DNA"/>
</dbReference>
<dbReference type="EMBL" id="AF193483">
    <property type="protein sequence ID" value="AAG31358.1"/>
    <property type="status" value="JOINED"/>
    <property type="molecule type" value="Genomic_DNA"/>
</dbReference>
<dbReference type="EMBL" id="AF193472">
    <property type="protein sequence ID" value="AAG31358.1"/>
    <property type="status" value="JOINED"/>
    <property type="molecule type" value="Genomic_DNA"/>
</dbReference>
<dbReference type="EMBL" id="AF193470">
    <property type="protein sequence ID" value="AAG31358.1"/>
    <property type="status" value="JOINED"/>
    <property type="molecule type" value="Genomic_DNA"/>
</dbReference>
<dbReference type="EMBL" id="AF193468">
    <property type="protein sequence ID" value="AAG31358.1"/>
    <property type="status" value="JOINED"/>
    <property type="molecule type" value="Genomic_DNA"/>
</dbReference>
<dbReference type="EMBL" id="AF193466">
    <property type="protein sequence ID" value="AAG31358.1"/>
    <property type="status" value="JOINED"/>
    <property type="molecule type" value="Genomic_DNA"/>
</dbReference>
<dbReference type="EMBL" id="AF193486">
    <property type="protein sequence ID" value="AAG31359.1"/>
    <property type="molecule type" value="Genomic_DNA"/>
</dbReference>
<dbReference type="EMBL" id="AF193473">
    <property type="protein sequence ID" value="AAG31359.1"/>
    <property type="status" value="JOINED"/>
    <property type="molecule type" value="Genomic_DNA"/>
</dbReference>
<dbReference type="EMBL" id="AF193474">
    <property type="protein sequence ID" value="AAG31359.1"/>
    <property type="status" value="JOINED"/>
    <property type="molecule type" value="Genomic_DNA"/>
</dbReference>
<dbReference type="EMBL" id="AF193475">
    <property type="protein sequence ID" value="AAG31359.1"/>
    <property type="status" value="JOINED"/>
    <property type="molecule type" value="Genomic_DNA"/>
</dbReference>
<dbReference type="EMBL" id="AF193476">
    <property type="protein sequence ID" value="AAG31359.1"/>
    <property type="status" value="JOINED"/>
    <property type="molecule type" value="Genomic_DNA"/>
</dbReference>
<dbReference type="EMBL" id="AF193477">
    <property type="protein sequence ID" value="AAG31359.1"/>
    <property type="status" value="JOINED"/>
    <property type="molecule type" value="Genomic_DNA"/>
</dbReference>
<dbReference type="EMBL" id="AF193478">
    <property type="protein sequence ID" value="AAG31359.1"/>
    <property type="status" value="JOINED"/>
    <property type="molecule type" value="Genomic_DNA"/>
</dbReference>
<dbReference type="EMBL" id="AF193479">
    <property type="protein sequence ID" value="AAG31359.1"/>
    <property type="status" value="JOINED"/>
    <property type="molecule type" value="Genomic_DNA"/>
</dbReference>
<dbReference type="EMBL" id="AF193480">
    <property type="protein sequence ID" value="AAG31359.1"/>
    <property type="status" value="JOINED"/>
    <property type="molecule type" value="Genomic_DNA"/>
</dbReference>
<dbReference type="EMBL" id="AF193481">
    <property type="protein sequence ID" value="AAG31359.1"/>
    <property type="status" value="JOINED"/>
    <property type="molecule type" value="Genomic_DNA"/>
</dbReference>
<dbReference type="EMBL" id="AF193482">
    <property type="protein sequence ID" value="AAG31359.1"/>
    <property type="status" value="JOINED"/>
    <property type="molecule type" value="Genomic_DNA"/>
</dbReference>
<dbReference type="EMBL" id="AF193483">
    <property type="protein sequence ID" value="AAG31359.1"/>
    <property type="status" value="JOINED"/>
    <property type="molecule type" value="Genomic_DNA"/>
</dbReference>
<dbReference type="EMBL" id="AF193484">
    <property type="protein sequence ID" value="AAG31359.1"/>
    <property type="status" value="JOINED"/>
    <property type="molecule type" value="Genomic_DNA"/>
</dbReference>
<dbReference type="EMBL" id="AF193485">
    <property type="protein sequence ID" value="AAG31359.1"/>
    <property type="status" value="JOINED"/>
    <property type="molecule type" value="Genomic_DNA"/>
</dbReference>
<dbReference type="RefSeq" id="XP_016785980.1">
    <molecule id="Q9GLN7-2"/>
    <property type="nucleotide sequence ID" value="XM_016930491.2"/>
</dbReference>
<dbReference type="SMR" id="Q9GLN7"/>
<dbReference type="FunCoup" id="Q9GLN7">
    <property type="interactions" value="320"/>
</dbReference>
<dbReference type="STRING" id="9598.ENSPTRP00000038991"/>
<dbReference type="MEROPS" id="M02.001"/>
<dbReference type="GlyCosmos" id="Q9GLN7">
    <property type="glycosylation" value="16 sites, No reported glycans"/>
</dbReference>
<dbReference type="PaxDb" id="9598-ENSPTRP00000038991"/>
<dbReference type="Ensembl" id="ENSPTRT00000102035.1">
    <molecule id="Q9GLN7-2"/>
    <property type="protein sequence ID" value="ENSPTRP00000073589.1"/>
    <property type="gene ID" value="ENSPTRG00000009513.6"/>
</dbReference>
<dbReference type="GeneID" id="449567"/>
<dbReference type="CTD" id="1636"/>
<dbReference type="eggNOG" id="KOG3690">
    <property type="taxonomic scope" value="Eukaryota"/>
</dbReference>
<dbReference type="GeneTree" id="ENSGT00940000162051"/>
<dbReference type="InParanoid" id="Q9GLN7"/>
<dbReference type="OMA" id="WPEYNDS"/>
<dbReference type="Proteomes" id="UP000002277">
    <property type="component" value="Chromosome 17"/>
</dbReference>
<dbReference type="Bgee" id="ENSPTRG00000009513">
    <property type="expression patterns" value="Expressed in testis and 18 other cell types or tissues"/>
</dbReference>
<dbReference type="GO" id="GO:0005737">
    <property type="term" value="C:cytoplasm"/>
    <property type="evidence" value="ECO:0007669"/>
    <property type="project" value="UniProtKB-SubCell"/>
</dbReference>
<dbReference type="GO" id="GO:0005576">
    <property type="term" value="C:extracellular region"/>
    <property type="evidence" value="ECO:0007669"/>
    <property type="project" value="UniProtKB-SubCell"/>
</dbReference>
<dbReference type="GO" id="GO:0005615">
    <property type="term" value="C:extracellular space"/>
    <property type="evidence" value="ECO:0000250"/>
    <property type="project" value="UniProtKB"/>
</dbReference>
<dbReference type="GO" id="GO:0005886">
    <property type="term" value="C:plasma membrane"/>
    <property type="evidence" value="ECO:0000250"/>
    <property type="project" value="UniProtKB"/>
</dbReference>
<dbReference type="GO" id="GO:0005516">
    <property type="term" value="F:calmodulin binding"/>
    <property type="evidence" value="ECO:0007669"/>
    <property type="project" value="UniProtKB-KW"/>
</dbReference>
<dbReference type="GO" id="GO:0004180">
    <property type="term" value="F:carboxypeptidase activity"/>
    <property type="evidence" value="ECO:0007669"/>
    <property type="project" value="UniProtKB-KW"/>
</dbReference>
<dbReference type="GO" id="GO:0031404">
    <property type="term" value="F:chloride ion binding"/>
    <property type="evidence" value="ECO:0000250"/>
    <property type="project" value="UniProtKB"/>
</dbReference>
<dbReference type="GO" id="GO:0046872">
    <property type="term" value="F:metal ion binding"/>
    <property type="evidence" value="ECO:0007669"/>
    <property type="project" value="UniProtKB-KW"/>
</dbReference>
<dbReference type="GO" id="GO:0070573">
    <property type="term" value="F:metallodipeptidase activity"/>
    <property type="evidence" value="ECO:0000250"/>
    <property type="project" value="UniProtKB"/>
</dbReference>
<dbReference type="GO" id="GO:0004222">
    <property type="term" value="F:metalloendopeptidase activity"/>
    <property type="evidence" value="ECO:0000250"/>
    <property type="project" value="UniProtKB"/>
</dbReference>
<dbReference type="GO" id="GO:0008237">
    <property type="term" value="F:metallopeptidase activity"/>
    <property type="evidence" value="ECO:0000318"/>
    <property type="project" value="GO_Central"/>
</dbReference>
<dbReference type="GO" id="GO:0008233">
    <property type="term" value="F:peptidase activity"/>
    <property type="evidence" value="ECO:0000250"/>
    <property type="project" value="UniProtKB"/>
</dbReference>
<dbReference type="GO" id="GO:0008241">
    <property type="term" value="F:peptidyl-dipeptidase activity"/>
    <property type="evidence" value="ECO:0000250"/>
    <property type="project" value="UniProtKB"/>
</dbReference>
<dbReference type="GO" id="GO:0002003">
    <property type="term" value="P:angiotensin maturation"/>
    <property type="evidence" value="ECO:0000250"/>
    <property type="project" value="UniProtKB"/>
</dbReference>
<dbReference type="GO" id="GO:0010815">
    <property type="term" value="P:bradykinin catabolic process"/>
    <property type="evidence" value="ECO:0000250"/>
    <property type="project" value="UniProtKB"/>
</dbReference>
<dbReference type="GO" id="GO:0042447">
    <property type="term" value="P:hormone catabolic process"/>
    <property type="evidence" value="ECO:0000250"/>
    <property type="project" value="UniProtKB"/>
</dbReference>
<dbReference type="GO" id="GO:0042445">
    <property type="term" value="P:hormone metabolic process"/>
    <property type="evidence" value="ECO:0000250"/>
    <property type="project" value="UniProtKB"/>
</dbReference>
<dbReference type="GO" id="GO:0001822">
    <property type="term" value="P:kidney development"/>
    <property type="evidence" value="ECO:0000250"/>
    <property type="project" value="UniProtKB"/>
</dbReference>
<dbReference type="GO" id="GO:0003084">
    <property type="term" value="P:positive regulation of systemic arterial blood pressure"/>
    <property type="evidence" value="ECO:0000318"/>
    <property type="project" value="GO_Central"/>
</dbReference>
<dbReference type="GO" id="GO:0008217">
    <property type="term" value="P:regulation of blood pressure"/>
    <property type="evidence" value="ECO:0000250"/>
    <property type="project" value="UniProtKB"/>
</dbReference>
<dbReference type="GO" id="GO:0048167">
    <property type="term" value="P:regulation of synaptic plasticity"/>
    <property type="evidence" value="ECO:0000250"/>
    <property type="project" value="UniProtKB"/>
</dbReference>
<dbReference type="GO" id="GO:0003081">
    <property type="term" value="P:regulation of systemic arterial blood pressure by renin-angiotensin"/>
    <property type="evidence" value="ECO:0000318"/>
    <property type="project" value="GO_Central"/>
</dbReference>
<dbReference type="GO" id="GO:0010814">
    <property type="term" value="P:substance P catabolic process"/>
    <property type="evidence" value="ECO:0000250"/>
    <property type="project" value="UniProtKB"/>
</dbReference>
<dbReference type="CDD" id="cd06461">
    <property type="entry name" value="M2_ACE"/>
    <property type="match status" value="2"/>
</dbReference>
<dbReference type="InterPro" id="IPR001548">
    <property type="entry name" value="Peptidase_M2"/>
</dbReference>
<dbReference type="PANTHER" id="PTHR10514">
    <property type="entry name" value="ANGIOTENSIN-CONVERTING ENZYME"/>
    <property type="match status" value="1"/>
</dbReference>
<dbReference type="PANTHER" id="PTHR10514:SF27">
    <property type="entry name" value="ANGIOTENSIN-CONVERTING ENZYME"/>
    <property type="match status" value="1"/>
</dbReference>
<dbReference type="Pfam" id="PF01401">
    <property type="entry name" value="Peptidase_M2"/>
    <property type="match status" value="2"/>
</dbReference>
<dbReference type="PRINTS" id="PR00791">
    <property type="entry name" value="PEPDIPTASEA"/>
</dbReference>
<dbReference type="SUPFAM" id="SSF55486">
    <property type="entry name" value="Metalloproteases ('zincins'), catalytic domain"/>
    <property type="match status" value="2"/>
</dbReference>
<dbReference type="PROSITE" id="PS52011">
    <property type="entry name" value="PEPTIDASE_M2"/>
    <property type="match status" value="2"/>
</dbReference>
<dbReference type="PROSITE" id="PS00142">
    <property type="entry name" value="ZINC_PROTEASE"/>
    <property type="match status" value="2"/>
</dbReference>
<comment type="function">
    <text evidence="1 2">Dipeptidyl carboxypeptidase that removes dipeptides from the C-terminus of a variety of circulating hormones, such as angiotensin I, bradykinin or enkephalins, thereby playing a key role in the regulation of blood pressure, electrolyte homeostasis or synaptic plasticity. Composed of two similar catalytic domains, each possessing a functional active site, with different selectivity for substrates. Plays a major role in the angiotensin-renin system that regulates blood pressure and sodium retention by the kidney by converting angiotensin I to angiotensin II, resulting in an increase of the vasoconstrictor activity of angiotensin. Also able to inactivate bradykinin, a potent vasodilator, and therefore enhance the blood pressure response. Acts as a regulator of synaptic transmission by mediating cleavage of neuropeptide hormones, such as substance P, neurotensin or enkephalins. Catalyzes degradation of different enkephalin neuropeptides (Met-enkephalin, Leu-enkephalin, Met-enkephalin-Arg-Phe and possibly Met-enkephalin-Arg-Gly-Leu) (By similarity). Acts as a regulator of synaptic plasticity in the nucleus accumbens of the brain by mediating cleavage of Met-enkephalin-Arg-Phe, a strong ligand of Mu-type opioid receptor OPRM1, into Met-enkephalin. Met-enkephalin-Arg-Phe cleavage by ACE decreases activation of OPRM1, leading to long-term synaptic potentiation of glutamate release (By similarity). Also acts as a regulator of hematopoietic stem cell differentiation by mediating degradation of hemoregulatory peptide N-acetyl-SDKP (AcSDKP). Acts as a regulator of cannabinoid signaling pathway by mediating degradation of hemopressin, an antagonist peptide of the cannabinoid receptor CNR1. Involved in amyloid-beta metabolism by catalyzing degradation of Amyloid-beta protein 40 and Amyloid-beta protein 42 peptides, thereby preventing plaque formation. Catalyzes cleavage of cholecystokinin (maturation of Cholecystokinin-8 and Cholecystokinin-5) and Gonadoliberin-1 (both maturation and degradation) hormones. Degradation of hemoregulatory peptide N-acetyl-SDKP (AcSDKP) and amyloid-beta proteins is mediated by the N-terminal catalytic domain, while angiotensin I and cholecystokinin cleavage is mediated by the C-terminal catalytic region (By similarity).</text>
</comment>
<comment type="function">
    <molecule>Angiotensin-converting enzyme, soluble form</molecule>
    <text evidence="2">Soluble form that is released in blood plasma and other body fluids following proteolytic cleavage in the juxtamembrane stalk region.</text>
</comment>
<comment type="function">
    <molecule>Isoform Testis-specific</molecule>
    <text evidence="1 2">Isoform produced by alternative promoter usage that is specifically expressed in spermatocytes and adult testis, and which is required for male fertility. In contrast to somatic isoforms, only contains one catalytic domain. Acts as a dipeptidyl carboxypeptidase that removes dipeptides from the C-terminus of substrates (By similarity). The identity of substrates that are needed for male fertility is unknown. May also have a glycosidase activity which releases GPI-anchored proteins from the membrane by cleaving the mannose linkage in the GPI moiety. The GPIase activity was reported to be essential for the egg-binding ability of the sperm. This activity is however unclear and has been challenged by other groups, suggesting that it may be indirect (By similarity).</text>
</comment>
<comment type="catalytic activity">
    <reaction evidence="2">
        <text>Release of a C-terminal dipeptide, oligopeptide-|-Xaa-Yaa, when Xaa is not Pro, and Yaa is neither Asp nor Glu. Thus, conversion of angiotensin I to angiotensin II, with increase in vasoconstrictor activity, but no action on angiotensin II.</text>
        <dbReference type="EC" id="3.4.15.1"/>
    </reaction>
</comment>
<comment type="catalytic activity">
    <reaction evidence="2">
        <text>angiotensin I + H2O = L-histidyl-L-leucine + angiotensin II</text>
        <dbReference type="Rhea" id="RHEA:63560"/>
        <dbReference type="ChEBI" id="CHEBI:15377"/>
        <dbReference type="ChEBI" id="CHEBI:58506"/>
        <dbReference type="ChEBI" id="CHEBI:147350"/>
        <dbReference type="ChEBI" id="CHEBI:147392"/>
        <dbReference type="EC" id="3.4.15.1"/>
    </reaction>
    <physiologicalReaction direction="left-to-right" evidence="2">
        <dbReference type="Rhea" id="RHEA:63561"/>
    </physiologicalReaction>
</comment>
<comment type="catalytic activity">
    <reaction evidence="2">
        <text>bradykinin + H2O = L-Phe-L-Arg + bradykinin(1-7)</text>
        <dbReference type="Rhea" id="RHEA:71451"/>
        <dbReference type="ChEBI" id="CHEBI:15377"/>
        <dbReference type="ChEBI" id="CHEBI:132988"/>
        <dbReference type="ChEBI" id="CHEBI:133147"/>
        <dbReference type="ChEBI" id="CHEBI:147352"/>
    </reaction>
    <physiologicalReaction direction="left-to-right" evidence="2">
        <dbReference type="Rhea" id="RHEA:71452"/>
    </physiologicalReaction>
</comment>
<comment type="catalytic activity">
    <reaction evidence="2">
        <text>substance P + H2O = substance P(1-9) + L-Leu-L-Met-NH2</text>
        <dbReference type="Rhea" id="RHEA:71459"/>
        <dbReference type="ChEBI" id="CHEBI:15377"/>
        <dbReference type="ChEBI" id="CHEBI:190692"/>
        <dbReference type="ChEBI" id="CHEBI:190693"/>
        <dbReference type="ChEBI" id="CHEBI:190700"/>
    </reaction>
    <physiologicalReaction direction="left-to-right" evidence="2">
        <dbReference type="Rhea" id="RHEA:71460"/>
    </physiologicalReaction>
</comment>
<comment type="catalytic activity">
    <reaction evidence="2">
        <text>substance P + H2O = substance P(1-8) + Gly-L-Leu-L-Met-NH2</text>
        <dbReference type="Rhea" id="RHEA:71463"/>
        <dbReference type="ChEBI" id="CHEBI:15377"/>
        <dbReference type="ChEBI" id="CHEBI:190692"/>
        <dbReference type="ChEBI" id="CHEBI:190694"/>
        <dbReference type="ChEBI" id="CHEBI:190699"/>
    </reaction>
    <physiologicalReaction direction="left-to-right" evidence="2">
        <dbReference type="Rhea" id="RHEA:71464"/>
    </physiologicalReaction>
</comment>
<comment type="catalytic activity">
    <reaction evidence="2">
        <text>substance P + H2O = L-Phe-L-Phe-Gly-L-Leu-L-Met-NH2 + substance P(1-6)</text>
        <dbReference type="Rhea" id="RHEA:71471"/>
        <dbReference type="ChEBI" id="CHEBI:15377"/>
        <dbReference type="ChEBI" id="CHEBI:190692"/>
        <dbReference type="ChEBI" id="CHEBI:190696"/>
        <dbReference type="ChEBI" id="CHEBI:190697"/>
    </reaction>
    <physiologicalReaction direction="left-to-right" evidence="2">
        <dbReference type="Rhea" id="RHEA:71472"/>
    </physiologicalReaction>
</comment>
<comment type="catalytic activity">
    <reaction evidence="2">
        <text>neurotensin + H2O = neurotensin(1-11) + L-isoleucyl-L-leucine</text>
        <dbReference type="Rhea" id="RHEA:71475"/>
        <dbReference type="ChEBI" id="CHEBI:15377"/>
        <dbReference type="ChEBI" id="CHEBI:147362"/>
        <dbReference type="ChEBI" id="CHEBI:190704"/>
        <dbReference type="ChEBI" id="CHEBI:190706"/>
    </reaction>
    <physiologicalReaction direction="left-to-right" evidence="2">
        <dbReference type="Rhea" id="RHEA:71476"/>
    </physiologicalReaction>
</comment>
<comment type="catalytic activity">
    <reaction evidence="2">
        <text>goralatide + H2O = N-acetyl-L-seryl-L-aspartate + L-lysyl-L-proline</text>
        <dbReference type="Rhea" id="RHEA:71455"/>
        <dbReference type="ChEBI" id="CHEBI:15377"/>
        <dbReference type="ChEBI" id="CHEBI:190701"/>
        <dbReference type="ChEBI" id="CHEBI:190702"/>
        <dbReference type="ChEBI" id="CHEBI:190703"/>
    </reaction>
    <physiologicalReaction direction="left-to-right" evidence="2">
        <dbReference type="Rhea" id="RHEA:71456"/>
    </physiologicalReaction>
</comment>
<comment type="catalytic activity">
    <reaction evidence="2">
        <text>Met-enkephalin + H2O = L-phenylalanyl-L-methionine + L-tyrosylglycylglycine</text>
        <dbReference type="Rhea" id="RHEA:71483"/>
        <dbReference type="ChEBI" id="CHEBI:15377"/>
        <dbReference type="ChEBI" id="CHEBI:189868"/>
        <dbReference type="ChEBI" id="CHEBI:190708"/>
        <dbReference type="ChEBI" id="CHEBI:190709"/>
    </reaction>
    <physiologicalReaction direction="left-to-right" evidence="2">
        <dbReference type="Rhea" id="RHEA:71484"/>
    </physiologicalReaction>
</comment>
<comment type="catalytic activity">
    <reaction evidence="2">
        <text>Leu-enkephalin + H2O = L-tyrosylglycylglycine + L-phenylalanyl-L-leucine</text>
        <dbReference type="Rhea" id="RHEA:71487"/>
        <dbReference type="ChEBI" id="CHEBI:15377"/>
        <dbReference type="ChEBI" id="CHEBI:190689"/>
        <dbReference type="ChEBI" id="CHEBI:190708"/>
        <dbReference type="ChEBI" id="CHEBI:190710"/>
    </reaction>
    <physiologicalReaction direction="left-to-right" evidence="2">
        <dbReference type="Rhea" id="RHEA:71488"/>
    </physiologicalReaction>
</comment>
<comment type="catalytic activity">
    <reaction evidence="1">
        <text>Met-enkephalin-Arg-Phe + H2O = L-arginyl-L-phenylalanine + Met-enkephalin</text>
        <dbReference type="Rhea" id="RHEA:70675"/>
        <dbReference type="ChEBI" id="CHEBI:15377"/>
        <dbReference type="ChEBI" id="CHEBI:189868"/>
        <dbReference type="ChEBI" id="CHEBI:189869"/>
        <dbReference type="ChEBI" id="CHEBI:189870"/>
    </reaction>
    <physiologicalReaction direction="left-to-right" evidence="1">
        <dbReference type="Rhea" id="RHEA:70676"/>
    </physiologicalReaction>
</comment>
<comment type="catalytic activity">
    <molecule>Isoform Testis-specific</molecule>
    <reaction evidence="2">
        <text>Release of a C-terminal dipeptide, oligopeptide-|-Xaa-Yaa, when Xaa is not Pro, and Yaa is neither Asp nor Glu. Thus, conversion of angiotensin I to angiotensin II, with increase in vasoconstrictor activity, but no action on angiotensin II.</text>
        <dbReference type="EC" id="3.4.15.1"/>
    </reaction>
</comment>
<comment type="cofactor">
    <cofactor evidence="2">
        <name>Zn(2+)</name>
        <dbReference type="ChEBI" id="CHEBI:29105"/>
    </cofactor>
    <text evidence="2">Binds 2 Zn(2+) ions per subunit.</text>
</comment>
<comment type="cofactor">
    <molecule>Isoform Testis-specific</molecule>
    <cofactor evidence="2">
        <name>Zn(2+)</name>
        <dbReference type="ChEBI" id="CHEBI:29105"/>
    </cofactor>
    <text evidence="2">Isoform Testis-specific only binds 1 Zn(2+) ion per subunit.</text>
</comment>
<comment type="cofactor">
    <cofactor evidence="2">
        <name>chloride</name>
        <dbReference type="ChEBI" id="CHEBI:17996"/>
    </cofactor>
    <text evidence="2">Binds 3 chloride ions per subunit.</text>
</comment>
<comment type="cofactor">
    <molecule>Isoform Testis-specific</molecule>
    <cofactor evidence="2">
        <name>chloride</name>
        <dbReference type="ChEBI" id="CHEBI:17996"/>
    </cofactor>
</comment>
<comment type="activity regulation">
    <text evidence="2">The dipeptidyl carboxypeptidase activity is strongly activated by chloride. The dipeptidyl carboxypeptidase activity is specifically inhibited by lisinopril, captopril and enalaprilat.</text>
</comment>
<comment type="activity regulation">
    <molecule>Isoform Testis-specific</molecule>
    <text evidence="2">Strongly inhibited by lisinopril and captopril.</text>
</comment>
<comment type="subunit">
    <text evidence="2 3">Monomer and homodimer; homodimerizes following binding to an inhibitor (By similarity). Interacts with calmodulin (CALM1, CALM2 or CALM3); interaction takes place in the cytoplasmic region and regulates phosphorylation and proteolytic cleavage (By similarity).</text>
</comment>
<comment type="subcellular location">
    <subcellularLocation>
        <location evidence="2">Cell membrane</location>
        <topology evidence="4">Single-pass type I membrane protein</topology>
    </subcellularLocation>
    <subcellularLocation>
        <location evidence="1">Cytoplasm</location>
    </subcellularLocation>
    <text evidence="1">Detected in both cell membrane and cytoplasm in neurons.</text>
</comment>
<comment type="subcellular location">
    <molecule>Angiotensin-converting enzyme, soluble form</molecule>
    <subcellularLocation>
        <location evidence="2">Secreted</location>
    </subcellularLocation>
</comment>
<comment type="subcellular location">
    <molecule>Isoform Testis-specific</molecule>
    <subcellularLocation>
        <location evidence="2">Cell membrane</location>
        <topology evidence="4">Single-pass type I membrane protein</topology>
    </subcellularLocation>
    <subcellularLocation>
        <location evidence="2">Secreted</location>
    </subcellularLocation>
    <text evidence="2">The testis-specific isoform can be cleaved before the transmembrane region, releasing a soluble form.</text>
</comment>
<comment type="alternative products">
    <event type="alternative promoter"/>
    <isoform>
        <id>Q9GLN7-1</id>
        <name>Somatic</name>
        <sequence type="displayed"/>
    </isoform>
    <isoform>
        <id>Q9GLN7-2</id>
        <id>Q9GLN6-1</id>
        <name>Testis-specific</name>
        <name>ACE-T</name>
        <sequence type="described" ref="VSP_037640 VSP_037641"/>
    </isoform>
</comment>
<comment type="PTM">
    <molecule>Angiotensin-converting enzyme, soluble form</molecule>
    <text evidence="2">Produced following proteolytic cleavage by secretase enzymes that cleave the transmembrane form in the juxtamembrane stalk region upstream of the transmembrane region. Cleavage can take place at different sites of the juxtamembrane stalk region.</text>
</comment>
<comment type="PTM">
    <text evidence="2 3">Phosphorylated by CK2 on Ser-1297; which allows membrane retention (By similarity). Phosphorylated on tyrosine residues on its extracellular part, promoting cleavage by secretase enzymes and formation of the soluble form (Angiotensin-converting enzyme, soluble form) (By similarity).</text>
</comment>
<comment type="similarity">
    <text evidence="7">Belongs to the peptidase M2 family.</text>
</comment>
<reference key="1">
    <citation type="journal article" date="2000" name="Genomics">
        <title>Human-chimpanzee DNA sequence variation in the four major genes of the renin angiotensin system.</title>
        <authorList>
            <person name="Dufour C."/>
            <person name="Casane D."/>
            <person name="Denton D."/>
            <person name="Wickings J."/>
            <person name="Corvol P."/>
            <person name="Jeunemaitre X."/>
        </authorList>
    </citation>
    <scope>NUCLEOTIDE SEQUENCE [GENOMIC DNA]</scope>
</reference>
<protein>
    <recommendedName>
        <fullName evidence="6">Angiotensin-converting enzyme</fullName>
        <shortName evidence="6">ACE</shortName>
        <ecNumber evidence="2">3.4.15.1</ecNumber>
    </recommendedName>
    <alternativeName>
        <fullName>Dipeptidyl carboxypeptidase I</fullName>
    </alternativeName>
    <alternativeName>
        <fullName evidence="2">Kininase II</fullName>
    </alternativeName>
    <cdAntigenName>CD143</cdAntigenName>
    <component>
        <recommendedName>
            <fullName evidence="2">Angiotensin-converting enzyme, soluble form</fullName>
        </recommendedName>
    </component>
</protein>
<name>ACE_PANTR</name>
<organism>
    <name type="scientific">Pan troglodytes</name>
    <name type="common">Chimpanzee</name>
    <dbReference type="NCBI Taxonomy" id="9598"/>
    <lineage>
        <taxon>Eukaryota</taxon>
        <taxon>Metazoa</taxon>
        <taxon>Chordata</taxon>
        <taxon>Craniata</taxon>
        <taxon>Vertebrata</taxon>
        <taxon>Euteleostomi</taxon>
        <taxon>Mammalia</taxon>
        <taxon>Eutheria</taxon>
        <taxon>Euarchontoglires</taxon>
        <taxon>Primates</taxon>
        <taxon>Haplorrhini</taxon>
        <taxon>Catarrhini</taxon>
        <taxon>Hominidae</taxon>
        <taxon>Pan</taxon>
    </lineage>
</organism>
<accession>Q9GLN7</accession>
<accession>Q9GLN6</accession>
<feature type="signal peptide" evidence="2">
    <location>
        <begin position="1"/>
        <end position="27"/>
    </location>
</feature>
<feature type="chain" id="PRO_0000028545" description="Angiotensin-converting enzyme">
    <location>
        <begin position="28"/>
        <end position="1304"/>
    </location>
</feature>
<feature type="chain" id="PRO_0000028546" description="Angiotensin-converting enzyme, soluble form" evidence="2">
    <location>
        <begin position="28"/>
        <end position="1230"/>
    </location>
</feature>
<feature type="topological domain" description="Extracellular" evidence="4">
    <location>
        <begin position="28"/>
        <end position="1257"/>
    </location>
</feature>
<feature type="transmembrane region" description="Helical" evidence="4">
    <location>
        <begin position="1258"/>
        <end position="1274"/>
    </location>
</feature>
<feature type="topological domain" description="Cytoplasmic" evidence="4">
    <location>
        <begin position="1275"/>
        <end position="1304"/>
    </location>
</feature>
<feature type="domain" description="Peptidase M2 1" evidence="5">
    <location>
        <begin position="38"/>
        <end position="622"/>
    </location>
</feature>
<feature type="domain" description="Peptidase M2 2" evidence="5">
    <location>
        <begin position="641"/>
        <end position="1220"/>
    </location>
</feature>
<feature type="region of interest" description="Juxtamembrane stalk" evidence="2">
    <location>
        <begin position="1213"/>
        <end position="1254"/>
    </location>
</feature>
<feature type="active site" description="Proton acceptor 1" evidence="5">
    <location>
        <position position="389"/>
    </location>
</feature>
<feature type="active site" description="Proton donor 1" evidence="5">
    <location>
        <position position="518"/>
    </location>
</feature>
<feature type="active site" description="Proton acceptor 2" evidence="5">
    <location>
        <position position="987"/>
    </location>
</feature>
<feature type="active site" description="Proton donor 2" evidence="5">
    <location>
        <position position="1116"/>
    </location>
</feature>
<feature type="binding site" evidence="5">
    <location>
        <position position="229"/>
    </location>
    <ligand>
        <name>chloride</name>
        <dbReference type="ChEBI" id="CHEBI:17996"/>
        <label>1</label>
    </ligand>
</feature>
<feature type="binding site" evidence="5">
    <location>
        <position position="388"/>
    </location>
    <ligand>
        <name>Zn(2+)</name>
        <dbReference type="ChEBI" id="CHEBI:29105"/>
        <label>1</label>
        <note>catalytic</note>
    </ligand>
</feature>
<feature type="binding site" evidence="5">
    <location>
        <position position="392"/>
    </location>
    <ligand>
        <name>Zn(2+)</name>
        <dbReference type="ChEBI" id="CHEBI:29105"/>
        <label>1</label>
        <note>catalytic</note>
    </ligand>
</feature>
<feature type="binding site" evidence="5">
    <location>
        <position position="416"/>
    </location>
    <ligand>
        <name>Zn(2+)</name>
        <dbReference type="ChEBI" id="CHEBI:29105"/>
        <label>1</label>
        <note>catalytic</note>
    </ligand>
</feature>
<feature type="binding site" evidence="5">
    <location>
        <position position="527"/>
    </location>
    <ligand>
        <name>chloride</name>
        <dbReference type="ChEBI" id="CHEBI:17996"/>
        <label>1</label>
    </ligand>
</feature>
<feature type="binding site" evidence="5">
    <location>
        <position position="789"/>
    </location>
    <ligand>
        <name>chloride</name>
        <dbReference type="ChEBI" id="CHEBI:17996"/>
        <label>2</label>
    </ligand>
</feature>
<feature type="binding site" evidence="5">
    <location>
        <position position="827"/>
    </location>
    <ligand>
        <name>chloride</name>
        <dbReference type="ChEBI" id="CHEBI:17996"/>
        <label>3</label>
    </ligand>
</feature>
<feature type="binding site" evidence="5">
    <location>
        <position position="986"/>
    </location>
    <ligand>
        <name>Zn(2+)</name>
        <dbReference type="ChEBI" id="CHEBI:29105"/>
        <label>2</label>
        <note>catalytic</note>
    </ligand>
</feature>
<feature type="binding site" evidence="5">
    <location>
        <position position="990"/>
    </location>
    <ligand>
        <name>Zn(2+)</name>
        <dbReference type="ChEBI" id="CHEBI:29105"/>
        <label>2</label>
        <note>catalytic</note>
    </ligand>
</feature>
<feature type="binding site" evidence="5">
    <location>
        <position position="1014"/>
    </location>
    <ligand>
        <name>Zn(2+)</name>
        <dbReference type="ChEBI" id="CHEBI:29105"/>
        <label>2</label>
        <note>catalytic</note>
    </ligand>
</feature>
<feature type="binding site" evidence="5">
    <location>
        <position position="1088"/>
    </location>
    <ligand>
        <name>chloride</name>
        <dbReference type="ChEBI" id="CHEBI:17996"/>
        <label>2</label>
    </ligand>
</feature>
<feature type="binding site" evidence="5">
    <location>
        <position position="1092"/>
    </location>
    <ligand>
        <name>chloride</name>
        <dbReference type="ChEBI" id="CHEBI:17996"/>
        <label>2</label>
    </ligand>
</feature>
<feature type="binding site" evidence="5">
    <location>
        <position position="1125"/>
    </location>
    <ligand>
        <name>chloride</name>
        <dbReference type="ChEBI" id="CHEBI:17996"/>
        <label>3</label>
    </ligand>
</feature>
<feature type="modified residue" description="Phosphoserine" evidence="2">
    <location>
        <position position="1297"/>
    </location>
</feature>
<feature type="glycosylation site" description="N-linked (GlcNAc...) asparagine" evidence="4">
    <location>
        <position position="36"/>
    </location>
</feature>
<feature type="glycosylation site" description="N-linked (GlcNAc...) asparagine" evidence="4">
    <location>
        <position position="52"/>
    </location>
</feature>
<feature type="glycosylation site" description="N-linked (GlcNAc...) asparagine" evidence="4">
    <location>
        <position position="72"/>
    </location>
</feature>
<feature type="glycosylation site" description="N-linked (GlcNAc...) asparagine" evidence="4">
    <location>
        <position position="109"/>
    </location>
</feature>
<feature type="glycosylation site" description="N-linked (GlcNAc...) asparagine" evidence="4">
    <location>
        <position position="144"/>
    </location>
</feature>
<feature type="glycosylation site" description="N-linked (GlcNAc...) asparagine" evidence="4">
    <location>
        <position position="158"/>
    </location>
</feature>
<feature type="glycosylation site" description="N-linked (GlcNAc...) asparagine" evidence="4">
    <location>
        <position position="316"/>
    </location>
</feature>
<feature type="glycosylation site" description="N-linked (GlcNAc...) asparagine" evidence="4">
    <location>
        <position position="440"/>
    </location>
</feature>
<feature type="glycosylation site" description="N-linked (GlcNAc...) asparagine" evidence="4">
    <location>
        <position position="443"/>
    </location>
</feature>
<feature type="glycosylation site" description="N-linked (GlcNAc...) asparagine" evidence="4">
    <location>
        <position position="507"/>
    </location>
</feature>
<feature type="glycosylation site" description="N-linked (GlcNAc...) asparagine" evidence="4">
    <location>
        <position position="675"/>
    </location>
</feature>
<feature type="glycosylation site" description="N-linked (GlcNAc...) (complex) asparagine" evidence="2">
    <location>
        <position position="693"/>
    </location>
</feature>
<feature type="glycosylation site" description="N-linked (GlcNAc...) (complex) asparagine" evidence="2">
    <location>
        <position position="712"/>
    </location>
</feature>
<feature type="glycosylation site" description="N-linked (GlcNAc...) asparagine" evidence="4">
    <location>
        <position position="758"/>
    </location>
</feature>
<feature type="glycosylation site" description="N-linked (GlcNAc...) asparagine" evidence="4">
    <location>
        <position position="940"/>
    </location>
</feature>
<feature type="glycosylation site" description="N-linked (GlcNAc...) asparagine" evidence="4">
    <location>
        <position position="1189"/>
    </location>
</feature>
<feature type="disulfide bond" evidence="5">
    <location>
        <begin position="155"/>
        <end position="163"/>
    </location>
</feature>
<feature type="disulfide bond" evidence="5">
    <location>
        <begin position="357"/>
        <end position="375"/>
    </location>
</feature>
<feature type="disulfide bond" evidence="5">
    <location>
        <begin position="543"/>
        <end position="555"/>
    </location>
</feature>
<feature type="disulfide bond" evidence="5">
    <location>
        <begin position="755"/>
        <end position="761"/>
    </location>
</feature>
<feature type="disulfide bond" evidence="5">
    <location>
        <begin position="955"/>
        <end position="973"/>
    </location>
</feature>
<feature type="disulfide bond" evidence="5">
    <location>
        <begin position="1141"/>
        <end position="1153"/>
    </location>
</feature>
<feature type="splice variant" id="VSP_037640" description="In isoform Testis-specific." evidence="7">
    <location>
        <begin position="1"/>
        <end position="572"/>
    </location>
</feature>
<feature type="splice variant" id="VSP_037641" description="In isoform Testis-specific." evidence="7">
    <original>AGSSRPWQEVLKDMVGLDALDAQPLLKYFQPVTQWLQEQNQQNGEVLGWPEYQWHPPLPDNYPEGID</original>
    <variation>MGQGWATAGLPSLLFLLLCYGHPLLVPSQEAPRQVTVTHGTSSQATTSGQTTTHQATAHQTSAQSPN</variation>
    <location>
        <begin position="573"/>
        <end position="639"/>
    </location>
</feature>